<sequence>MEPKTKKQRSLYIPYAGPVLLEFPLLNKGSAFSMEERRNFNLLGLLPEVVETIEEQAERAWIQYQGFKTEIDKHIYLRNIQDTNETLFYRLVNNHLDEMMPVIYTPTVGAACERFSEIYRRSRGVFISYQNRHNMDDILQNVPNHNIKVIVVTDGERILGLGDQGIGGMGIPIGKLSLYTACGGISPAYTLPVVLDVGTNNQQLLNDPLYMGWRNPRITDDEYYEFVDEFIQAVKQRWPDVLLQFEDFAQKNAMPLLNRYRNEICSFNDDIQGTAAVTVGTLIAASRAAGGQLSEKKIVFLGAGSAGCGIAEMIIAQTQREGLSEEAARQKVFMVDRFGLLTDKMPNLLPFQTKLVQKRENLSDWDTDSDVLSLLDVVRNVKPDILIGVSGQTGLFTEEIIREMHKHCPRPIVMPLSNPTSRVEATPQDIIAWTEGNALVATGSPFNPVVWKDKIYPIAQCNNAFIFPGIGLGVIASGASRITDEMLMSASETLAQYSPLVLNGEGLVLPELKDIQKVSRAIAFAVGKMAQQQGVAVKTSAEALQQAIDDNFWHAEYRDYRRTSI</sequence>
<accession>Q1RBT9</accession>
<keyword id="KW-0479">Metal-binding</keyword>
<keyword id="KW-0520">NAD</keyword>
<keyword id="KW-0560">Oxidoreductase</keyword>
<comment type="catalytic activity">
    <reaction evidence="1">
        <text>(S)-malate + NAD(+) = pyruvate + CO2 + NADH</text>
        <dbReference type="Rhea" id="RHEA:12653"/>
        <dbReference type="ChEBI" id="CHEBI:15361"/>
        <dbReference type="ChEBI" id="CHEBI:15589"/>
        <dbReference type="ChEBI" id="CHEBI:16526"/>
        <dbReference type="ChEBI" id="CHEBI:57540"/>
        <dbReference type="ChEBI" id="CHEBI:57945"/>
        <dbReference type="EC" id="1.1.1.38"/>
    </reaction>
</comment>
<comment type="catalytic activity">
    <reaction evidence="1">
        <text>oxaloacetate + H(+) = pyruvate + CO2</text>
        <dbReference type="Rhea" id="RHEA:15641"/>
        <dbReference type="ChEBI" id="CHEBI:15361"/>
        <dbReference type="ChEBI" id="CHEBI:15378"/>
        <dbReference type="ChEBI" id="CHEBI:16452"/>
        <dbReference type="ChEBI" id="CHEBI:16526"/>
        <dbReference type="EC" id="1.1.1.38"/>
    </reaction>
</comment>
<comment type="cofactor">
    <cofactor evidence="1">
        <name>Mg(2+)</name>
        <dbReference type="ChEBI" id="CHEBI:18420"/>
    </cofactor>
    <cofactor evidence="1">
        <name>Mn(2+)</name>
        <dbReference type="ChEBI" id="CHEBI:29035"/>
    </cofactor>
    <text evidence="1">Divalent metal cations. Prefers magnesium or manganese.</text>
</comment>
<comment type="subunit">
    <text evidence="1">Homotetramer.</text>
</comment>
<comment type="similarity">
    <text evidence="1">Belongs to the malic enzymes family.</text>
</comment>
<comment type="sequence caution" evidence="2">
    <conflict type="erroneous initiation">
        <sequence resource="EMBL-CDS" id="ABE07175"/>
    </conflict>
</comment>
<organism>
    <name type="scientific">Escherichia coli (strain UTI89 / UPEC)</name>
    <dbReference type="NCBI Taxonomy" id="364106"/>
    <lineage>
        <taxon>Bacteria</taxon>
        <taxon>Pseudomonadati</taxon>
        <taxon>Pseudomonadota</taxon>
        <taxon>Gammaproteobacteria</taxon>
        <taxon>Enterobacterales</taxon>
        <taxon>Enterobacteriaceae</taxon>
        <taxon>Escherichia</taxon>
    </lineage>
</organism>
<protein>
    <recommendedName>
        <fullName evidence="1">NAD-dependent malic enzyme</fullName>
        <shortName evidence="1">NAD-ME</shortName>
        <ecNumber evidence="1">1.1.1.38</ecNumber>
    </recommendedName>
</protein>
<feature type="chain" id="PRO_0000323537" description="NAD-dependent malic enzyme">
    <location>
        <begin position="1"/>
        <end position="565"/>
    </location>
</feature>
<feature type="active site" description="Proton donor" evidence="1">
    <location>
        <position position="104"/>
    </location>
</feature>
<feature type="active site" description="Proton acceptor" evidence="1">
    <location>
        <position position="175"/>
    </location>
</feature>
<feature type="binding site" evidence="1">
    <location>
        <position position="157"/>
    </location>
    <ligand>
        <name>NAD(+)</name>
        <dbReference type="ChEBI" id="CHEBI:57540"/>
    </ligand>
</feature>
<feature type="binding site" evidence="1">
    <location>
        <position position="246"/>
    </location>
    <ligand>
        <name>a divalent metal cation</name>
        <dbReference type="ChEBI" id="CHEBI:60240"/>
    </ligand>
</feature>
<feature type="binding site" evidence="1">
    <location>
        <position position="247"/>
    </location>
    <ligand>
        <name>a divalent metal cation</name>
        <dbReference type="ChEBI" id="CHEBI:60240"/>
    </ligand>
</feature>
<feature type="binding site" evidence="1">
    <location>
        <position position="270"/>
    </location>
    <ligand>
        <name>a divalent metal cation</name>
        <dbReference type="ChEBI" id="CHEBI:60240"/>
    </ligand>
</feature>
<feature type="binding site" evidence="1">
    <location>
        <position position="270"/>
    </location>
    <ligand>
        <name>NAD(+)</name>
        <dbReference type="ChEBI" id="CHEBI:57540"/>
    </ligand>
</feature>
<feature type="binding site" evidence="1">
    <location>
        <position position="418"/>
    </location>
    <ligand>
        <name>NAD(+)</name>
        <dbReference type="ChEBI" id="CHEBI:57540"/>
    </ligand>
</feature>
<feature type="site" description="Important for activity" evidence="1">
    <location>
        <position position="270"/>
    </location>
</feature>
<reference key="1">
    <citation type="journal article" date="2006" name="Proc. Natl. Acad. Sci. U.S.A.">
        <title>Identification of genes subject to positive selection in uropathogenic strains of Escherichia coli: a comparative genomics approach.</title>
        <authorList>
            <person name="Chen S.L."/>
            <person name="Hung C.-S."/>
            <person name="Xu J."/>
            <person name="Reigstad C.S."/>
            <person name="Magrini V."/>
            <person name="Sabo A."/>
            <person name="Blasiar D."/>
            <person name="Bieri T."/>
            <person name="Meyer R.R."/>
            <person name="Ozersky P."/>
            <person name="Armstrong J.R."/>
            <person name="Fulton R.S."/>
            <person name="Latreille J.P."/>
            <person name="Spieth J."/>
            <person name="Hooton T.M."/>
            <person name="Mardis E.R."/>
            <person name="Hultgren S.J."/>
            <person name="Gordon J.I."/>
        </authorList>
    </citation>
    <scope>NUCLEOTIDE SEQUENCE [LARGE SCALE GENOMIC DNA]</scope>
    <source>
        <strain>UTI89 / UPEC</strain>
    </source>
</reference>
<name>MAO1_ECOUT</name>
<gene>
    <name evidence="1" type="primary">maeA</name>
    <name type="ordered locus">UTI89_C1697</name>
</gene>
<proteinExistence type="inferred from homology"/>
<evidence type="ECO:0000255" key="1">
    <source>
        <dbReference type="HAMAP-Rule" id="MF_01619"/>
    </source>
</evidence>
<evidence type="ECO:0000305" key="2"/>
<dbReference type="EC" id="1.1.1.38" evidence="1"/>
<dbReference type="EMBL" id="CP000243">
    <property type="protein sequence ID" value="ABE07175.1"/>
    <property type="status" value="ALT_INIT"/>
    <property type="molecule type" value="Genomic_DNA"/>
</dbReference>
<dbReference type="RefSeq" id="WP_000433462.1">
    <property type="nucleotide sequence ID" value="NZ_CP064825.1"/>
</dbReference>
<dbReference type="SMR" id="Q1RBT9"/>
<dbReference type="KEGG" id="eci:UTI89_C1697"/>
<dbReference type="HOGENOM" id="CLU_011405_5_2_6"/>
<dbReference type="Proteomes" id="UP000001952">
    <property type="component" value="Chromosome"/>
</dbReference>
<dbReference type="GO" id="GO:0005829">
    <property type="term" value="C:cytosol"/>
    <property type="evidence" value="ECO:0007669"/>
    <property type="project" value="TreeGrafter"/>
</dbReference>
<dbReference type="GO" id="GO:0004471">
    <property type="term" value="F:malate dehydrogenase (decarboxylating) (NAD+) activity"/>
    <property type="evidence" value="ECO:0007669"/>
    <property type="project" value="UniProtKB-UniRule"/>
</dbReference>
<dbReference type="GO" id="GO:0046872">
    <property type="term" value="F:metal ion binding"/>
    <property type="evidence" value="ECO:0007669"/>
    <property type="project" value="UniProtKB-KW"/>
</dbReference>
<dbReference type="GO" id="GO:0051287">
    <property type="term" value="F:NAD binding"/>
    <property type="evidence" value="ECO:0007669"/>
    <property type="project" value="InterPro"/>
</dbReference>
<dbReference type="GO" id="GO:0008948">
    <property type="term" value="F:oxaloacetate decarboxylase activity"/>
    <property type="evidence" value="ECO:0007669"/>
    <property type="project" value="UniProtKB-UniRule"/>
</dbReference>
<dbReference type="GO" id="GO:0006108">
    <property type="term" value="P:malate metabolic process"/>
    <property type="evidence" value="ECO:0007669"/>
    <property type="project" value="TreeGrafter"/>
</dbReference>
<dbReference type="CDD" id="cd05312">
    <property type="entry name" value="NAD_bind_1_malic_enz"/>
    <property type="match status" value="1"/>
</dbReference>
<dbReference type="FunFam" id="3.40.50.10380:FF:000001">
    <property type="entry name" value="NAD-dependent malic enzyme"/>
    <property type="match status" value="1"/>
</dbReference>
<dbReference type="FunFam" id="3.40.50.720:FF:000055">
    <property type="entry name" value="NAD-dependent malic enzyme"/>
    <property type="match status" value="1"/>
</dbReference>
<dbReference type="Gene3D" id="3.40.50.10380">
    <property type="entry name" value="Malic enzyme, N-terminal domain"/>
    <property type="match status" value="1"/>
</dbReference>
<dbReference type="Gene3D" id="3.40.50.720">
    <property type="entry name" value="NAD(P)-binding Rossmann-like Domain"/>
    <property type="match status" value="1"/>
</dbReference>
<dbReference type="HAMAP" id="MF_01619">
    <property type="entry name" value="NAD_malic_enz"/>
    <property type="match status" value="1"/>
</dbReference>
<dbReference type="InterPro" id="IPR046346">
    <property type="entry name" value="Aminoacid_DH-like_N_sf"/>
</dbReference>
<dbReference type="InterPro" id="IPR015884">
    <property type="entry name" value="Malic_enzyme_CS"/>
</dbReference>
<dbReference type="InterPro" id="IPR012301">
    <property type="entry name" value="Malic_N_dom"/>
</dbReference>
<dbReference type="InterPro" id="IPR037062">
    <property type="entry name" value="Malic_N_dom_sf"/>
</dbReference>
<dbReference type="InterPro" id="IPR012302">
    <property type="entry name" value="Malic_NAD-bd"/>
</dbReference>
<dbReference type="InterPro" id="IPR001891">
    <property type="entry name" value="Malic_OxRdtase"/>
</dbReference>
<dbReference type="InterPro" id="IPR036291">
    <property type="entry name" value="NAD(P)-bd_dom_sf"/>
</dbReference>
<dbReference type="InterPro" id="IPR023667">
    <property type="entry name" value="NAD_malic_enz_proteobac"/>
</dbReference>
<dbReference type="NCBIfam" id="NF010052">
    <property type="entry name" value="PRK13529.1"/>
    <property type="match status" value="1"/>
</dbReference>
<dbReference type="PANTHER" id="PTHR23406">
    <property type="entry name" value="MALIC ENZYME-RELATED"/>
    <property type="match status" value="1"/>
</dbReference>
<dbReference type="PANTHER" id="PTHR23406:SF34">
    <property type="entry name" value="NAD-DEPENDENT MALIC ENZYME, MITOCHONDRIAL"/>
    <property type="match status" value="1"/>
</dbReference>
<dbReference type="Pfam" id="PF00390">
    <property type="entry name" value="malic"/>
    <property type="match status" value="1"/>
</dbReference>
<dbReference type="Pfam" id="PF03949">
    <property type="entry name" value="Malic_M"/>
    <property type="match status" value="1"/>
</dbReference>
<dbReference type="PIRSF" id="PIRSF000106">
    <property type="entry name" value="ME"/>
    <property type="match status" value="1"/>
</dbReference>
<dbReference type="PRINTS" id="PR00072">
    <property type="entry name" value="MALOXRDTASE"/>
</dbReference>
<dbReference type="SMART" id="SM01274">
    <property type="entry name" value="malic"/>
    <property type="match status" value="1"/>
</dbReference>
<dbReference type="SMART" id="SM00919">
    <property type="entry name" value="Malic_M"/>
    <property type="match status" value="1"/>
</dbReference>
<dbReference type="SUPFAM" id="SSF53223">
    <property type="entry name" value="Aminoacid dehydrogenase-like, N-terminal domain"/>
    <property type="match status" value="1"/>
</dbReference>
<dbReference type="SUPFAM" id="SSF51735">
    <property type="entry name" value="NAD(P)-binding Rossmann-fold domains"/>
    <property type="match status" value="1"/>
</dbReference>
<dbReference type="PROSITE" id="PS00331">
    <property type="entry name" value="MALIC_ENZYMES"/>
    <property type="match status" value="1"/>
</dbReference>